<keyword id="KW-0072">Autophagy</keyword>
<keyword id="KW-0963">Cytoplasm</keyword>
<keyword id="KW-0653">Protein transport</keyword>
<keyword id="KW-0813">Transport</keyword>
<keyword id="KW-0833">Ubl conjugation pathway</keyword>
<name>ATG3_BOTF1</name>
<sequence>MNFLHSTLDRLREFTPVSNTSTFRTNGQITPEEFVAAGDYLVFKFPTWSWADASPTSKRANYLPAGKQFLVTRGVPCHRRLDDDFAGDAGHDETVVRDGEDFRGDGPHSPGDDEDGWLRTGGLAASQEARVRDVRTVDESGEMGEREDDEDDIPDMEDDDDDDEAIIRDPKADNASSSRRTYTIYIAYTPYYRTPRLYLSGYLSSSQPLPPHLMMEDIVGDYKDKTVTLEDFPYFSNNIKMASIHPCKHASVMKTLLDRADAALKLRREKQRQGKAVPGSKDTGMEGLVDDFEKTKIGDKKAVLEGLKAGGNGNDEWEVLQHDQDFANEEEEVAIRVDQYLVVFLKFMASVTPGIEHDFTMGV</sequence>
<accession>M7UQV4</accession>
<organism>
    <name type="scientific">Botryotinia fuckeliana (strain BcDW1)</name>
    <name type="common">Noble rot fungus</name>
    <name type="synonym">Botrytis cinerea</name>
    <dbReference type="NCBI Taxonomy" id="1290391"/>
    <lineage>
        <taxon>Eukaryota</taxon>
        <taxon>Fungi</taxon>
        <taxon>Dikarya</taxon>
        <taxon>Ascomycota</taxon>
        <taxon>Pezizomycotina</taxon>
        <taxon>Leotiomycetes</taxon>
        <taxon>Helotiales</taxon>
        <taxon>Sclerotiniaceae</taxon>
        <taxon>Botrytis</taxon>
    </lineage>
</organism>
<gene>
    <name evidence="4" type="primary">atg3</name>
    <name type="ORF">BcDW1_2003</name>
</gene>
<feature type="chain" id="PRO_0000443869" description="Autophagy-related protein 3">
    <location>
        <begin position="1"/>
        <end position="363"/>
    </location>
</feature>
<feature type="region of interest" description="Disordered" evidence="2">
    <location>
        <begin position="84"/>
        <end position="174"/>
    </location>
</feature>
<feature type="region of interest" description="Flexible region" evidence="1">
    <location>
        <begin position="84"/>
        <end position="171"/>
    </location>
</feature>
<feature type="region of interest" description="Handle region" evidence="1">
    <location>
        <begin position="251"/>
        <end position="339"/>
    </location>
</feature>
<feature type="compositionally biased region" description="Basic and acidic residues" evidence="2">
    <location>
        <begin position="84"/>
        <end position="106"/>
    </location>
</feature>
<feature type="compositionally biased region" description="Basic and acidic residues" evidence="2">
    <location>
        <begin position="129"/>
        <end position="138"/>
    </location>
</feature>
<feature type="compositionally biased region" description="Acidic residues" evidence="2">
    <location>
        <begin position="139"/>
        <end position="164"/>
    </location>
</feature>
<feature type="active site" description="Glycyl thioester intermediate" evidence="1">
    <location>
        <position position="247"/>
    </location>
</feature>
<evidence type="ECO:0000250" key="1">
    <source>
        <dbReference type="UniProtKB" id="P40344"/>
    </source>
</evidence>
<evidence type="ECO:0000256" key="2">
    <source>
        <dbReference type="SAM" id="MobiDB-lite"/>
    </source>
</evidence>
<evidence type="ECO:0000269" key="3">
    <source>
    </source>
</evidence>
<evidence type="ECO:0000303" key="4">
    <source>
    </source>
</evidence>
<evidence type="ECO:0000305" key="5"/>
<protein>
    <recommendedName>
        <fullName evidence="4">Autophagy-related protein 3</fullName>
    </recommendedName>
    <alternativeName>
        <fullName evidence="4">Autophagy-related E2-like conjugation enzyme atg3</fullName>
    </alternativeName>
</protein>
<dbReference type="EMBL" id="KB707749">
    <property type="protein sequence ID" value="EMR89343.1"/>
    <property type="molecule type" value="Genomic_DNA"/>
</dbReference>
<dbReference type="SMR" id="M7UQV4"/>
<dbReference type="STRING" id="1290391.M7UQV4"/>
<dbReference type="HOGENOM" id="CLU_027518_2_0_1"/>
<dbReference type="OrthoDB" id="73349at5178"/>
<dbReference type="Proteomes" id="UP000012045">
    <property type="component" value="Unassembled WGS sequence"/>
</dbReference>
<dbReference type="GO" id="GO:0005829">
    <property type="term" value="C:cytosol"/>
    <property type="evidence" value="ECO:0007669"/>
    <property type="project" value="TreeGrafter"/>
</dbReference>
<dbReference type="GO" id="GO:0000407">
    <property type="term" value="C:phagophore assembly site"/>
    <property type="evidence" value="ECO:0007669"/>
    <property type="project" value="TreeGrafter"/>
</dbReference>
<dbReference type="GO" id="GO:0019776">
    <property type="term" value="F:Atg8-family ligase activity"/>
    <property type="evidence" value="ECO:0007669"/>
    <property type="project" value="TreeGrafter"/>
</dbReference>
<dbReference type="GO" id="GO:0000045">
    <property type="term" value="P:autophagosome assembly"/>
    <property type="evidence" value="ECO:0007669"/>
    <property type="project" value="TreeGrafter"/>
</dbReference>
<dbReference type="GO" id="GO:0000422">
    <property type="term" value="P:autophagy of mitochondrion"/>
    <property type="evidence" value="ECO:0007669"/>
    <property type="project" value="TreeGrafter"/>
</dbReference>
<dbReference type="GO" id="GO:0061723">
    <property type="term" value="P:glycophagy"/>
    <property type="evidence" value="ECO:0007669"/>
    <property type="project" value="TreeGrafter"/>
</dbReference>
<dbReference type="GO" id="GO:0044804">
    <property type="term" value="P:nucleophagy"/>
    <property type="evidence" value="ECO:0007669"/>
    <property type="project" value="TreeGrafter"/>
</dbReference>
<dbReference type="GO" id="GO:0015031">
    <property type="term" value="P:protein transport"/>
    <property type="evidence" value="ECO:0007669"/>
    <property type="project" value="UniProtKB-KW"/>
</dbReference>
<dbReference type="InterPro" id="IPR007135">
    <property type="entry name" value="Atg3/Atg10"/>
</dbReference>
<dbReference type="PANTHER" id="PTHR12866">
    <property type="entry name" value="UBIQUITIN-LIKE-CONJUGATING ENZYME ATG3"/>
    <property type="match status" value="1"/>
</dbReference>
<dbReference type="PANTHER" id="PTHR12866:SF2">
    <property type="entry name" value="UBIQUITIN-LIKE-CONJUGATING ENZYME ATG3"/>
    <property type="match status" value="1"/>
</dbReference>
<dbReference type="Pfam" id="PF03987">
    <property type="entry name" value="Autophagy_act_C"/>
    <property type="match status" value="1"/>
</dbReference>
<reference key="1">
    <citation type="journal article" date="2013" name="Genome Announc.">
        <title>Draft genome sequence of Botrytis cinerea BcDW1, inoculum for noble rot of grape berries.</title>
        <authorList>
            <person name="Blanco-Ulate B."/>
            <person name="Allen G."/>
            <person name="Powell A.L."/>
            <person name="Cantu D."/>
        </authorList>
    </citation>
    <scope>NUCLEOTIDE SEQUENCE [LARGE SCALE GENOMIC DNA]</scope>
    <source>
        <strain>BcDW1</strain>
    </source>
</reference>
<reference key="2">
    <citation type="journal article" date="2018" name="Curr. Genet.">
        <title>Ubiquitin-like activating enzymes BcAtg3 and BcAtg7 participate in development and pathogenesis of Botrytis cinerea.</title>
        <authorList>
            <person name="Ren W."/>
            <person name="Sang C."/>
            <person name="Shi D."/>
            <person name="Song X."/>
            <person name="Zhou M."/>
            <person name="Chen C."/>
        </authorList>
    </citation>
    <scope>FUNCTION</scope>
    <scope>DISRUPTION PHENOTYPE</scope>
    <scope>INTERACTION WITH ATG7</scope>
    <scope>SUBCELLULAR LOCATION</scope>
</reference>
<proteinExistence type="evidence at protein level"/>
<comment type="function">
    <text evidence="1 3">E2 conjugating enzyme required for the cytoplasm to vacuole transport (Cvt) and autophagy (PubMed:29417220). Required for selective autophagic degradation of the nucleus (nucleophagy) as well as for mitophagy which contributes to regulate mitochondrial quantity and quality by eliminating the mitochondria to a basal level to fulfill cellular energy requirements and preventing excess ROS production (By similarity). Responsible for the E2-like covalent binding of phosphatidylethanolamine to the C-terminal Gly of atg8. The atg12-atg5 conjugate plays a role of an E3 and promotes the transfer of atg8 from atg3 to phosphatidylethanolamine (PE) (By similarity). This step is required for the membrane association of atg8. The formation of the atg8-phosphatidylethanolamine conjugate is essential for autophagy and for the cytoplasm to vacuole transport (Cvt) (By similarity). The atg8-PE conjugate mediates tethering between adjacent membranes and stimulates membrane hemifusion, leading to expansion of the autophagosomal membrane during autophagy (By similarity). Required for normal mycelial growth and conidiogenesis, and regulates sclerotial formation (PubMed:29417220). Plays an essential role in pathogenesis (PubMed:29417220).</text>
</comment>
<comment type="subunit">
    <text evidence="1 3">Monomer (By similarity). Interacts with atg8 through an intermediate thioester bond through the C-terminal Gly of atg8 (By similarity). Interacts with the C-terminal region of the E1-like atg7 enzyme (PubMed:29417220). Also interacts with the atg12-atg5 conjugate (By similarity).</text>
</comment>
<comment type="subcellular location">
    <subcellularLocation>
        <location evidence="3">Cytoplasm</location>
    </subcellularLocation>
</comment>
<comment type="domain">
    <text evidence="1">The N-terminal region is involved in phosphatidylethanolamine-binding and is required for atg8-PE conjugation (By similarity).</text>
</comment>
<comment type="domain">
    <text evidence="1">The flexible region (FR) is required for atg7-binding (By similarity).</text>
</comment>
<comment type="domain">
    <text evidence="1">The handle region (HR) contains the atg8 interaction motif (AIM) and mediates binding to atg8. It is crucial for the cytoplasm-to-vacuole targeting pathway (By similarity).</text>
</comment>
<comment type="disruption phenotype">
    <text evidence="3">Blocks the autophagic process (PubMed:29417220). Leads to fewer aerial hyphae and slower mycelial growth rate and fails to produce any conidia (PubMed:29417220). Also reduces the production of sclerotia in cold environment (PubMed:29417220). Fails to infect wounded cucumber leaves and shows only slight virulence on wounded tomato and grape fruits (PubMed:29417220).</text>
</comment>
<comment type="similarity">
    <text evidence="5">Belongs to the ATG3 family.</text>
</comment>